<organism>
    <name type="scientific">Colwellia psychrerythraea (strain 34H / ATCC BAA-681)</name>
    <name type="common">Vibrio psychroerythus</name>
    <dbReference type="NCBI Taxonomy" id="167879"/>
    <lineage>
        <taxon>Bacteria</taxon>
        <taxon>Pseudomonadati</taxon>
        <taxon>Pseudomonadota</taxon>
        <taxon>Gammaproteobacteria</taxon>
        <taxon>Alteromonadales</taxon>
        <taxon>Colwelliaceae</taxon>
        <taxon>Colwellia</taxon>
    </lineage>
</organism>
<comment type="similarity">
    <text evidence="1">Belongs to the UPF0301 (AlgH) family.</text>
</comment>
<comment type="sequence caution" evidence="2">
    <conflict type="erroneous initiation">
        <sequence resource="EMBL-CDS" id="AAZ25144"/>
    </conflict>
</comment>
<gene>
    <name type="ordered locus">CPS_1252</name>
</gene>
<feature type="chain" id="PRO_0000258819" description="UPF0301 protein CPS_1252">
    <location>
        <begin position="1"/>
        <end position="210"/>
    </location>
</feature>
<protein>
    <recommendedName>
        <fullName evidence="1">UPF0301 protein CPS_1252</fullName>
    </recommendedName>
</protein>
<reference key="1">
    <citation type="journal article" date="2005" name="Proc. Natl. Acad. Sci. U.S.A.">
        <title>The psychrophilic lifestyle as revealed by the genome sequence of Colwellia psychrerythraea 34H through genomic and proteomic analyses.</title>
        <authorList>
            <person name="Methe B.A."/>
            <person name="Nelson K.E."/>
            <person name="Deming J.W."/>
            <person name="Momen B."/>
            <person name="Melamud E."/>
            <person name="Zhang X."/>
            <person name="Moult J."/>
            <person name="Madupu R."/>
            <person name="Nelson W.C."/>
            <person name="Dodson R.J."/>
            <person name="Brinkac L.M."/>
            <person name="Daugherty S.C."/>
            <person name="Durkin A.S."/>
            <person name="DeBoy R.T."/>
            <person name="Kolonay J.F."/>
            <person name="Sullivan S.A."/>
            <person name="Zhou L."/>
            <person name="Davidsen T.M."/>
            <person name="Wu M."/>
            <person name="Huston A.L."/>
            <person name="Lewis M."/>
            <person name="Weaver B."/>
            <person name="Weidman J.F."/>
            <person name="Khouri H."/>
            <person name="Utterback T.R."/>
            <person name="Feldblyum T.V."/>
            <person name="Fraser C.M."/>
        </authorList>
    </citation>
    <scope>NUCLEOTIDE SEQUENCE [LARGE SCALE GENOMIC DNA]</scope>
    <source>
        <strain>34H / ATCC BAA-681</strain>
    </source>
</reference>
<evidence type="ECO:0000255" key="1">
    <source>
        <dbReference type="HAMAP-Rule" id="MF_00758"/>
    </source>
</evidence>
<evidence type="ECO:0000305" key="2"/>
<accession>Q486M0</accession>
<proteinExistence type="inferred from homology"/>
<sequence length="210" mass="22872">MSSLENQLLIAMPSLGDPYFNKTVTYICEHNEDGAMGLIINLPVNITLADLLKQIEPDEGDKTGNVNSNSELTKSDDVNDITLVTDITNSLEQLVLAGGPIAQQRGFVLHSSQPGWSSSLVLSKELMITTSKDILMALGTQQAPEQFIVTLGYAGWGPGQLEQELQANSWLTTPADIEILFKTPIEQRWKKATEKLGIDLAHLSTDIGHA</sequence>
<dbReference type="EMBL" id="CP000083">
    <property type="protein sequence ID" value="AAZ25144.1"/>
    <property type="status" value="ALT_INIT"/>
    <property type="molecule type" value="Genomic_DNA"/>
</dbReference>
<dbReference type="SMR" id="Q486M0"/>
<dbReference type="STRING" id="167879.CPS_1252"/>
<dbReference type="KEGG" id="cps:CPS_1252"/>
<dbReference type="HOGENOM" id="CLU_057596_1_0_6"/>
<dbReference type="Proteomes" id="UP000000547">
    <property type="component" value="Chromosome"/>
</dbReference>
<dbReference type="GO" id="GO:0005829">
    <property type="term" value="C:cytosol"/>
    <property type="evidence" value="ECO:0007669"/>
    <property type="project" value="TreeGrafter"/>
</dbReference>
<dbReference type="Gene3D" id="3.40.1740.10">
    <property type="entry name" value="VC0467-like"/>
    <property type="match status" value="1"/>
</dbReference>
<dbReference type="HAMAP" id="MF_00758">
    <property type="entry name" value="UPF0301"/>
    <property type="match status" value="1"/>
</dbReference>
<dbReference type="InterPro" id="IPR003774">
    <property type="entry name" value="AlgH-like"/>
</dbReference>
<dbReference type="PANTHER" id="PTHR30327">
    <property type="entry name" value="UNCHARACTERIZED PROTEIN YQGE"/>
    <property type="match status" value="1"/>
</dbReference>
<dbReference type="PANTHER" id="PTHR30327:SF1">
    <property type="entry name" value="UPF0301 PROTEIN YQGE"/>
    <property type="match status" value="1"/>
</dbReference>
<dbReference type="Pfam" id="PF02622">
    <property type="entry name" value="DUF179"/>
    <property type="match status" value="1"/>
</dbReference>
<dbReference type="SUPFAM" id="SSF143456">
    <property type="entry name" value="VC0467-like"/>
    <property type="match status" value="1"/>
</dbReference>
<name>Y1252_COLP3</name>